<protein>
    <recommendedName>
        <fullName evidence="1">Xaa-Pro dipeptidase</fullName>
        <shortName evidence="1">X-Pro dipeptidase</shortName>
        <ecNumber evidence="1">3.4.13.9</ecNumber>
    </recommendedName>
    <alternativeName>
        <fullName evidence="1">Imidodipeptidase</fullName>
    </alternativeName>
    <alternativeName>
        <fullName evidence="1">Proline dipeptidase</fullName>
        <shortName evidence="1">Prolidase</shortName>
    </alternativeName>
</protein>
<proteinExistence type="inferred from homology"/>
<dbReference type="EC" id="3.4.13.9" evidence="1"/>
<dbReference type="EMBL" id="BX950851">
    <property type="protein sequence ID" value="CAG73128.1"/>
    <property type="molecule type" value="Genomic_DNA"/>
</dbReference>
<dbReference type="RefSeq" id="WP_011091848.1">
    <property type="nucleotide sequence ID" value="NC_004547.2"/>
</dbReference>
<dbReference type="SMR" id="Q6DAP4"/>
<dbReference type="STRING" id="218491.ECA0209"/>
<dbReference type="MEROPS" id="M24.003"/>
<dbReference type="KEGG" id="eca:ECA0209"/>
<dbReference type="PATRIC" id="fig|218491.5.peg.208"/>
<dbReference type="eggNOG" id="COG0006">
    <property type="taxonomic scope" value="Bacteria"/>
</dbReference>
<dbReference type="HOGENOM" id="CLU_050675_0_0_6"/>
<dbReference type="OrthoDB" id="9806388at2"/>
<dbReference type="Proteomes" id="UP000007966">
    <property type="component" value="Chromosome"/>
</dbReference>
<dbReference type="GO" id="GO:0005829">
    <property type="term" value="C:cytosol"/>
    <property type="evidence" value="ECO:0007669"/>
    <property type="project" value="TreeGrafter"/>
</dbReference>
<dbReference type="GO" id="GO:0004177">
    <property type="term" value="F:aminopeptidase activity"/>
    <property type="evidence" value="ECO:0007669"/>
    <property type="project" value="TreeGrafter"/>
</dbReference>
<dbReference type="GO" id="GO:0046872">
    <property type="term" value="F:metal ion binding"/>
    <property type="evidence" value="ECO:0007669"/>
    <property type="project" value="UniProtKB-KW"/>
</dbReference>
<dbReference type="GO" id="GO:0008235">
    <property type="term" value="F:metalloexopeptidase activity"/>
    <property type="evidence" value="ECO:0007669"/>
    <property type="project" value="UniProtKB-UniRule"/>
</dbReference>
<dbReference type="GO" id="GO:0016795">
    <property type="term" value="F:phosphoric triester hydrolase activity"/>
    <property type="evidence" value="ECO:0007669"/>
    <property type="project" value="InterPro"/>
</dbReference>
<dbReference type="GO" id="GO:0102009">
    <property type="term" value="F:proline dipeptidase activity"/>
    <property type="evidence" value="ECO:0007669"/>
    <property type="project" value="UniProtKB-EC"/>
</dbReference>
<dbReference type="GO" id="GO:0006508">
    <property type="term" value="P:proteolysis"/>
    <property type="evidence" value="ECO:0007669"/>
    <property type="project" value="UniProtKB-KW"/>
</dbReference>
<dbReference type="CDD" id="cd01087">
    <property type="entry name" value="Prolidase"/>
    <property type="match status" value="1"/>
</dbReference>
<dbReference type="Gene3D" id="3.90.230.10">
    <property type="entry name" value="Creatinase/methionine aminopeptidase superfamily"/>
    <property type="match status" value="1"/>
</dbReference>
<dbReference type="Gene3D" id="3.40.350.10">
    <property type="entry name" value="Creatinase/prolidase N-terminal domain"/>
    <property type="match status" value="1"/>
</dbReference>
<dbReference type="HAMAP" id="MF_01279">
    <property type="entry name" value="X_Pro_dipeptid"/>
    <property type="match status" value="1"/>
</dbReference>
<dbReference type="InterPro" id="IPR029149">
    <property type="entry name" value="Creatin/AminoP/Spt16_N"/>
</dbReference>
<dbReference type="InterPro" id="IPR036005">
    <property type="entry name" value="Creatinase/aminopeptidase-like"/>
</dbReference>
<dbReference type="InterPro" id="IPR048819">
    <property type="entry name" value="PepQ_N"/>
</dbReference>
<dbReference type="InterPro" id="IPR000994">
    <property type="entry name" value="Pept_M24"/>
</dbReference>
<dbReference type="InterPro" id="IPR001131">
    <property type="entry name" value="Peptidase_M24B_aminopep-P_CS"/>
</dbReference>
<dbReference type="InterPro" id="IPR052433">
    <property type="entry name" value="X-Pro_dipept-like"/>
</dbReference>
<dbReference type="InterPro" id="IPR022846">
    <property type="entry name" value="X_Pro_dipept"/>
</dbReference>
<dbReference type="NCBIfam" id="NF010133">
    <property type="entry name" value="PRK13607.1"/>
    <property type="match status" value="1"/>
</dbReference>
<dbReference type="PANTHER" id="PTHR43226">
    <property type="entry name" value="XAA-PRO AMINOPEPTIDASE 3"/>
    <property type="match status" value="1"/>
</dbReference>
<dbReference type="PANTHER" id="PTHR43226:SF8">
    <property type="entry name" value="XAA-PRO DIPEPTIDASE"/>
    <property type="match status" value="1"/>
</dbReference>
<dbReference type="Pfam" id="PF21216">
    <property type="entry name" value="PepQ_N"/>
    <property type="match status" value="1"/>
</dbReference>
<dbReference type="Pfam" id="PF00557">
    <property type="entry name" value="Peptidase_M24"/>
    <property type="match status" value="1"/>
</dbReference>
<dbReference type="SUPFAM" id="SSF55920">
    <property type="entry name" value="Creatinase/aminopeptidase"/>
    <property type="match status" value="1"/>
</dbReference>
<dbReference type="PROSITE" id="PS00491">
    <property type="entry name" value="PROLINE_PEPTIDASE"/>
    <property type="match status" value="1"/>
</dbReference>
<accession>Q6DAP4</accession>
<comment type="function">
    <text evidence="1">Splits dipeptides with a prolyl residue in the C-terminal position.</text>
</comment>
<comment type="catalytic activity">
    <reaction evidence="1">
        <text>Xaa-L-Pro dipeptide + H2O = an L-alpha-amino acid + L-proline</text>
        <dbReference type="Rhea" id="RHEA:76407"/>
        <dbReference type="ChEBI" id="CHEBI:15377"/>
        <dbReference type="ChEBI" id="CHEBI:59869"/>
        <dbReference type="ChEBI" id="CHEBI:60039"/>
        <dbReference type="ChEBI" id="CHEBI:195196"/>
        <dbReference type="EC" id="3.4.13.9"/>
    </reaction>
</comment>
<comment type="cofactor">
    <cofactor evidence="1">
        <name>Mn(2+)</name>
        <dbReference type="ChEBI" id="CHEBI:29035"/>
    </cofactor>
    <text evidence="1">Binds 2 manganese ions per subunit.</text>
</comment>
<comment type="similarity">
    <text evidence="1">Belongs to the peptidase M24B family. Bacterial-type prolidase subfamily.</text>
</comment>
<name>PEPQ_PECAS</name>
<organism>
    <name type="scientific">Pectobacterium atrosepticum (strain SCRI 1043 / ATCC BAA-672)</name>
    <name type="common">Erwinia carotovora subsp. atroseptica</name>
    <dbReference type="NCBI Taxonomy" id="218491"/>
    <lineage>
        <taxon>Bacteria</taxon>
        <taxon>Pseudomonadati</taxon>
        <taxon>Pseudomonadota</taxon>
        <taxon>Gammaproteobacteria</taxon>
        <taxon>Enterobacterales</taxon>
        <taxon>Pectobacteriaceae</taxon>
        <taxon>Pectobacterium</taxon>
    </lineage>
</organism>
<feature type="chain" id="PRO_0000303840" description="Xaa-Pro dipeptidase">
    <location>
        <begin position="1"/>
        <end position="443"/>
    </location>
</feature>
<feature type="binding site" evidence="1">
    <location>
        <position position="246"/>
    </location>
    <ligand>
        <name>Mn(2+)</name>
        <dbReference type="ChEBI" id="CHEBI:29035"/>
        <label>2</label>
    </ligand>
</feature>
<feature type="binding site" evidence="1">
    <location>
        <position position="257"/>
    </location>
    <ligand>
        <name>Mn(2+)</name>
        <dbReference type="ChEBI" id="CHEBI:29035"/>
        <label>1</label>
    </ligand>
</feature>
<feature type="binding site" evidence="1">
    <location>
        <position position="257"/>
    </location>
    <ligand>
        <name>Mn(2+)</name>
        <dbReference type="ChEBI" id="CHEBI:29035"/>
        <label>2</label>
    </ligand>
</feature>
<feature type="binding site" evidence="1">
    <location>
        <position position="339"/>
    </location>
    <ligand>
        <name>Mn(2+)</name>
        <dbReference type="ChEBI" id="CHEBI:29035"/>
        <label>1</label>
    </ligand>
</feature>
<feature type="binding site" evidence="1">
    <location>
        <position position="384"/>
    </location>
    <ligand>
        <name>Mn(2+)</name>
        <dbReference type="ChEBI" id="CHEBI:29035"/>
        <label>1</label>
    </ligand>
</feature>
<feature type="binding site" evidence="1">
    <location>
        <position position="423"/>
    </location>
    <ligand>
        <name>Mn(2+)</name>
        <dbReference type="ChEBI" id="CHEBI:29035"/>
        <label>1</label>
    </ligand>
</feature>
<feature type="binding site" evidence="1">
    <location>
        <position position="423"/>
    </location>
    <ligand>
        <name>Mn(2+)</name>
        <dbReference type="ChEBI" id="CHEBI:29035"/>
        <label>2</label>
    </ligand>
</feature>
<keyword id="KW-0224">Dipeptidase</keyword>
<keyword id="KW-0378">Hydrolase</keyword>
<keyword id="KW-0464">Manganese</keyword>
<keyword id="KW-0479">Metal-binding</keyword>
<keyword id="KW-0482">Metalloprotease</keyword>
<keyword id="KW-0645">Protease</keyword>
<keyword id="KW-1185">Reference proteome</keyword>
<gene>
    <name evidence="1" type="primary">pepQ</name>
    <name type="ordered locus">ECA0209</name>
</gene>
<reference key="1">
    <citation type="journal article" date="2004" name="Proc. Natl. Acad. Sci. U.S.A.">
        <title>Genome sequence of the enterobacterial phytopathogen Erwinia carotovora subsp. atroseptica and characterization of virulence factors.</title>
        <authorList>
            <person name="Bell K.S."/>
            <person name="Sebaihia M."/>
            <person name="Pritchard L."/>
            <person name="Holden M.T.G."/>
            <person name="Hyman L.J."/>
            <person name="Holeva M.C."/>
            <person name="Thomson N.R."/>
            <person name="Bentley S.D."/>
            <person name="Churcher L.J.C."/>
            <person name="Mungall K."/>
            <person name="Atkin R."/>
            <person name="Bason N."/>
            <person name="Brooks K."/>
            <person name="Chillingworth T."/>
            <person name="Clark K."/>
            <person name="Doggett J."/>
            <person name="Fraser A."/>
            <person name="Hance Z."/>
            <person name="Hauser H."/>
            <person name="Jagels K."/>
            <person name="Moule S."/>
            <person name="Norbertczak H."/>
            <person name="Ormond D."/>
            <person name="Price C."/>
            <person name="Quail M.A."/>
            <person name="Sanders M."/>
            <person name="Walker D."/>
            <person name="Whitehead S."/>
            <person name="Salmond G.P.C."/>
            <person name="Birch P.R.J."/>
            <person name="Parkhill J."/>
            <person name="Toth I.K."/>
        </authorList>
    </citation>
    <scope>NUCLEOTIDE SEQUENCE [LARGE SCALE GENOMIC DNA]</scope>
    <source>
        <strain>SCRI 1043 / ATCC BAA-672</strain>
    </source>
</reference>
<sequence length="443" mass="50148">MEKLASLYHHHLATLQTRAQAVLARHKLDALLIHSGELLTVFLDDHDYPFKVNPQFKAWVPVTQVPNCWLWIDGVNPPKLWFYSPVDYWHSVAPVPESFWTAGVEIAVLRNADDIGQLLPAQRERVAYIGYAPQRAQDLGIRADNINPQGVLDYLHYHRAYKTDYELACMREAQKTAVIGHRAAHEAFLSGMSEFDINLAYLTATGHRDIDVPYGNIIALNEHAAVLHYTQLDHQVPSDVRSFLIDAGAEYNGYAADLTRTYSAQSDGAFAQLIKDLNQEMLALIDTMQAGVRYTDYHIQMHQRIAKLLKSHQLVRDISEEAMVEQGLTLPFLPHGLGHPLGLQVHDVAGFMQDDRGTHLAAPTQHPYLRCTRVLEPGMVMTIEPGIYFIESLLAPWREGECSQHFDWQKIDALKPFGGIRIEDNIVIHEGRVENMTRDLNLA</sequence>
<evidence type="ECO:0000255" key="1">
    <source>
        <dbReference type="HAMAP-Rule" id="MF_01279"/>
    </source>
</evidence>